<comment type="function">
    <text evidence="1">Catalyzes the methylthiolation of an aspartic acid residue of ribosomal protein uS12.</text>
</comment>
<comment type="catalytic activity">
    <reaction evidence="1">
        <text>L-aspartate(89)-[ribosomal protein uS12]-hydrogen + (sulfur carrier)-SH + AH2 + 2 S-adenosyl-L-methionine = 3-methylsulfanyl-L-aspartate(89)-[ribosomal protein uS12]-hydrogen + (sulfur carrier)-H + 5'-deoxyadenosine + L-methionine + A + S-adenosyl-L-homocysteine + 2 H(+)</text>
        <dbReference type="Rhea" id="RHEA:37087"/>
        <dbReference type="Rhea" id="RHEA-COMP:10460"/>
        <dbReference type="Rhea" id="RHEA-COMP:10461"/>
        <dbReference type="Rhea" id="RHEA-COMP:14737"/>
        <dbReference type="Rhea" id="RHEA-COMP:14739"/>
        <dbReference type="ChEBI" id="CHEBI:13193"/>
        <dbReference type="ChEBI" id="CHEBI:15378"/>
        <dbReference type="ChEBI" id="CHEBI:17319"/>
        <dbReference type="ChEBI" id="CHEBI:17499"/>
        <dbReference type="ChEBI" id="CHEBI:29917"/>
        <dbReference type="ChEBI" id="CHEBI:29961"/>
        <dbReference type="ChEBI" id="CHEBI:57844"/>
        <dbReference type="ChEBI" id="CHEBI:57856"/>
        <dbReference type="ChEBI" id="CHEBI:59789"/>
        <dbReference type="ChEBI" id="CHEBI:64428"/>
        <dbReference type="ChEBI" id="CHEBI:73599"/>
        <dbReference type="EC" id="2.8.4.4"/>
    </reaction>
</comment>
<comment type="cofactor">
    <cofactor evidence="1">
        <name>[4Fe-4S] cluster</name>
        <dbReference type="ChEBI" id="CHEBI:49883"/>
    </cofactor>
    <text evidence="1">Binds 2 [4Fe-4S] clusters. One cluster is coordinated with 3 cysteines and an exchangeable S-adenosyl-L-methionine.</text>
</comment>
<comment type="subcellular location">
    <subcellularLocation>
        <location evidence="1">Cytoplasm</location>
    </subcellularLocation>
</comment>
<comment type="similarity">
    <text evidence="1">Belongs to the methylthiotransferase family. RimO subfamily.</text>
</comment>
<accession>B7H1U1</accession>
<protein>
    <recommendedName>
        <fullName evidence="1">Ribosomal protein uS12 methylthiotransferase RimO</fullName>
        <shortName evidence="1">uS12 MTTase</shortName>
        <shortName evidence="1">uS12 methylthiotransferase</shortName>
        <ecNumber evidence="1">2.8.4.4</ecNumber>
    </recommendedName>
    <alternativeName>
        <fullName evidence="1">Ribosomal protein uS12 (aspartate-C(3))-methylthiotransferase</fullName>
    </alternativeName>
    <alternativeName>
        <fullName evidence="1">Ribosome maturation factor RimO</fullName>
    </alternativeName>
</protein>
<feature type="chain" id="PRO_0000374679" description="Ribosomal protein uS12 methylthiotransferase RimO">
    <location>
        <begin position="1"/>
        <end position="447"/>
    </location>
</feature>
<feature type="domain" description="MTTase N-terminal" evidence="1">
    <location>
        <begin position="4"/>
        <end position="114"/>
    </location>
</feature>
<feature type="domain" description="Radical SAM core" evidence="2">
    <location>
        <begin position="133"/>
        <end position="370"/>
    </location>
</feature>
<feature type="domain" description="TRAM" evidence="1">
    <location>
        <begin position="373"/>
        <end position="443"/>
    </location>
</feature>
<feature type="binding site" evidence="1">
    <location>
        <position position="13"/>
    </location>
    <ligand>
        <name>[4Fe-4S] cluster</name>
        <dbReference type="ChEBI" id="CHEBI:49883"/>
        <label>1</label>
    </ligand>
</feature>
<feature type="binding site" evidence="1">
    <location>
        <position position="49"/>
    </location>
    <ligand>
        <name>[4Fe-4S] cluster</name>
        <dbReference type="ChEBI" id="CHEBI:49883"/>
        <label>1</label>
    </ligand>
</feature>
<feature type="binding site" evidence="1">
    <location>
        <position position="78"/>
    </location>
    <ligand>
        <name>[4Fe-4S] cluster</name>
        <dbReference type="ChEBI" id="CHEBI:49883"/>
        <label>1</label>
    </ligand>
</feature>
<feature type="binding site" evidence="1">
    <location>
        <position position="147"/>
    </location>
    <ligand>
        <name>[4Fe-4S] cluster</name>
        <dbReference type="ChEBI" id="CHEBI:49883"/>
        <label>2</label>
        <note>4Fe-4S-S-AdoMet</note>
    </ligand>
</feature>
<feature type="binding site" evidence="1">
    <location>
        <position position="151"/>
    </location>
    <ligand>
        <name>[4Fe-4S] cluster</name>
        <dbReference type="ChEBI" id="CHEBI:49883"/>
        <label>2</label>
        <note>4Fe-4S-S-AdoMet</note>
    </ligand>
</feature>
<feature type="binding site" evidence="1">
    <location>
        <position position="154"/>
    </location>
    <ligand>
        <name>[4Fe-4S] cluster</name>
        <dbReference type="ChEBI" id="CHEBI:49883"/>
        <label>2</label>
        <note>4Fe-4S-S-AdoMet</note>
    </ligand>
</feature>
<reference key="1">
    <citation type="journal article" date="2008" name="J. Bacteriol.">
        <title>Comparative genome sequence analysis of multidrug-resistant Acinetobacter baumannii.</title>
        <authorList>
            <person name="Adams M.D."/>
            <person name="Goglin K."/>
            <person name="Molyneaux N."/>
            <person name="Hujer K.M."/>
            <person name="Lavender H."/>
            <person name="Jamison J.J."/>
            <person name="MacDonald I.J."/>
            <person name="Martin K.M."/>
            <person name="Russo T."/>
            <person name="Campagnari A.A."/>
            <person name="Hujer A.M."/>
            <person name="Bonomo R.A."/>
            <person name="Gill S.R."/>
        </authorList>
    </citation>
    <scope>NUCLEOTIDE SEQUENCE [LARGE SCALE GENOMIC DNA]</scope>
    <source>
        <strain>AB307-0294</strain>
    </source>
</reference>
<keyword id="KW-0004">4Fe-4S</keyword>
<keyword id="KW-0963">Cytoplasm</keyword>
<keyword id="KW-0408">Iron</keyword>
<keyword id="KW-0411">Iron-sulfur</keyword>
<keyword id="KW-0479">Metal-binding</keyword>
<keyword id="KW-0949">S-adenosyl-L-methionine</keyword>
<keyword id="KW-0808">Transferase</keyword>
<dbReference type="EC" id="2.8.4.4" evidence="1"/>
<dbReference type="EMBL" id="CP001172">
    <property type="protein sequence ID" value="ACJ59241.1"/>
    <property type="molecule type" value="Genomic_DNA"/>
</dbReference>
<dbReference type="RefSeq" id="WP_000856681.1">
    <property type="nucleotide sequence ID" value="NZ_CP001172.1"/>
</dbReference>
<dbReference type="SMR" id="B7H1U1"/>
<dbReference type="HOGENOM" id="CLU_018697_0_0_6"/>
<dbReference type="Proteomes" id="UP000006924">
    <property type="component" value="Chromosome"/>
</dbReference>
<dbReference type="GO" id="GO:0005829">
    <property type="term" value="C:cytosol"/>
    <property type="evidence" value="ECO:0007669"/>
    <property type="project" value="TreeGrafter"/>
</dbReference>
<dbReference type="GO" id="GO:0051539">
    <property type="term" value="F:4 iron, 4 sulfur cluster binding"/>
    <property type="evidence" value="ECO:0007669"/>
    <property type="project" value="UniProtKB-UniRule"/>
</dbReference>
<dbReference type="GO" id="GO:0035599">
    <property type="term" value="F:aspartic acid methylthiotransferase activity"/>
    <property type="evidence" value="ECO:0007669"/>
    <property type="project" value="TreeGrafter"/>
</dbReference>
<dbReference type="GO" id="GO:0046872">
    <property type="term" value="F:metal ion binding"/>
    <property type="evidence" value="ECO:0007669"/>
    <property type="project" value="UniProtKB-KW"/>
</dbReference>
<dbReference type="GO" id="GO:0103039">
    <property type="term" value="F:protein methylthiotransferase activity"/>
    <property type="evidence" value="ECO:0007669"/>
    <property type="project" value="UniProtKB-EC"/>
</dbReference>
<dbReference type="GO" id="GO:0006400">
    <property type="term" value="P:tRNA modification"/>
    <property type="evidence" value="ECO:0007669"/>
    <property type="project" value="InterPro"/>
</dbReference>
<dbReference type="CDD" id="cd01335">
    <property type="entry name" value="Radical_SAM"/>
    <property type="match status" value="1"/>
</dbReference>
<dbReference type="FunFam" id="3.40.50.12160:FF:000002">
    <property type="entry name" value="Ribosomal protein S12 methylthiotransferase RimO"/>
    <property type="match status" value="1"/>
</dbReference>
<dbReference type="FunFam" id="3.80.30.20:FF:000001">
    <property type="entry name" value="tRNA-2-methylthio-N(6)-dimethylallyladenosine synthase 2"/>
    <property type="match status" value="1"/>
</dbReference>
<dbReference type="Gene3D" id="3.40.50.12160">
    <property type="entry name" value="Methylthiotransferase, N-terminal domain"/>
    <property type="match status" value="1"/>
</dbReference>
<dbReference type="Gene3D" id="2.40.50.140">
    <property type="entry name" value="Nucleic acid-binding proteins"/>
    <property type="match status" value="1"/>
</dbReference>
<dbReference type="Gene3D" id="3.80.30.20">
    <property type="entry name" value="tm_1862 like domain"/>
    <property type="match status" value="1"/>
</dbReference>
<dbReference type="HAMAP" id="MF_01865">
    <property type="entry name" value="MTTase_RimO"/>
    <property type="match status" value="1"/>
</dbReference>
<dbReference type="InterPro" id="IPR006638">
    <property type="entry name" value="Elp3/MiaA/NifB-like_rSAM"/>
</dbReference>
<dbReference type="InterPro" id="IPR005839">
    <property type="entry name" value="Methylthiotransferase"/>
</dbReference>
<dbReference type="InterPro" id="IPR020612">
    <property type="entry name" value="Methylthiotransferase_CS"/>
</dbReference>
<dbReference type="InterPro" id="IPR013848">
    <property type="entry name" value="Methylthiotransferase_N"/>
</dbReference>
<dbReference type="InterPro" id="IPR038135">
    <property type="entry name" value="Methylthiotransferase_N_sf"/>
</dbReference>
<dbReference type="InterPro" id="IPR012340">
    <property type="entry name" value="NA-bd_OB-fold"/>
</dbReference>
<dbReference type="InterPro" id="IPR005840">
    <property type="entry name" value="Ribosomal_uS12_MeSTrfase_RimO"/>
</dbReference>
<dbReference type="InterPro" id="IPR007197">
    <property type="entry name" value="rSAM"/>
</dbReference>
<dbReference type="InterPro" id="IPR023404">
    <property type="entry name" value="rSAM_horseshoe"/>
</dbReference>
<dbReference type="InterPro" id="IPR002792">
    <property type="entry name" value="TRAM_dom"/>
</dbReference>
<dbReference type="NCBIfam" id="TIGR01125">
    <property type="entry name" value="30S ribosomal protein S12 methylthiotransferase RimO"/>
    <property type="match status" value="1"/>
</dbReference>
<dbReference type="NCBIfam" id="TIGR00089">
    <property type="entry name" value="MiaB/RimO family radical SAM methylthiotransferase"/>
    <property type="match status" value="1"/>
</dbReference>
<dbReference type="PANTHER" id="PTHR43837">
    <property type="entry name" value="RIBOSOMAL PROTEIN S12 METHYLTHIOTRANSFERASE RIMO"/>
    <property type="match status" value="1"/>
</dbReference>
<dbReference type="PANTHER" id="PTHR43837:SF1">
    <property type="entry name" value="RIBOSOMAL PROTEIN US12 METHYLTHIOTRANSFERASE RIMO"/>
    <property type="match status" value="1"/>
</dbReference>
<dbReference type="Pfam" id="PF04055">
    <property type="entry name" value="Radical_SAM"/>
    <property type="match status" value="1"/>
</dbReference>
<dbReference type="Pfam" id="PF18693">
    <property type="entry name" value="TRAM_2"/>
    <property type="match status" value="1"/>
</dbReference>
<dbReference type="Pfam" id="PF00919">
    <property type="entry name" value="UPF0004"/>
    <property type="match status" value="1"/>
</dbReference>
<dbReference type="SFLD" id="SFLDG01082">
    <property type="entry name" value="B12-binding_domain_containing"/>
    <property type="match status" value="1"/>
</dbReference>
<dbReference type="SFLD" id="SFLDG01061">
    <property type="entry name" value="methylthiotransferase"/>
    <property type="match status" value="1"/>
</dbReference>
<dbReference type="SFLD" id="SFLDF00274">
    <property type="entry name" value="ribosomal_protein_S12_methylth"/>
    <property type="match status" value="1"/>
</dbReference>
<dbReference type="SMART" id="SM00729">
    <property type="entry name" value="Elp3"/>
    <property type="match status" value="1"/>
</dbReference>
<dbReference type="SUPFAM" id="SSF102114">
    <property type="entry name" value="Radical SAM enzymes"/>
    <property type="match status" value="1"/>
</dbReference>
<dbReference type="PROSITE" id="PS51449">
    <property type="entry name" value="MTTASE_N"/>
    <property type="match status" value="1"/>
</dbReference>
<dbReference type="PROSITE" id="PS01278">
    <property type="entry name" value="MTTASE_RADICAL"/>
    <property type="match status" value="1"/>
</dbReference>
<dbReference type="PROSITE" id="PS51918">
    <property type="entry name" value="RADICAL_SAM"/>
    <property type="match status" value="1"/>
</dbReference>
<dbReference type="PROSITE" id="PS50926">
    <property type="entry name" value="TRAM"/>
    <property type="match status" value="1"/>
</dbReference>
<name>RIMO_ACIB3</name>
<organism>
    <name type="scientific">Acinetobacter baumannii (strain AB307-0294)</name>
    <dbReference type="NCBI Taxonomy" id="557600"/>
    <lineage>
        <taxon>Bacteria</taxon>
        <taxon>Pseudomonadati</taxon>
        <taxon>Pseudomonadota</taxon>
        <taxon>Gammaproteobacteria</taxon>
        <taxon>Moraxellales</taxon>
        <taxon>Moraxellaceae</taxon>
        <taxon>Acinetobacter</taxon>
        <taxon>Acinetobacter calcoaceticus/baumannii complex</taxon>
    </lineage>
</organism>
<evidence type="ECO:0000255" key="1">
    <source>
        <dbReference type="HAMAP-Rule" id="MF_01865"/>
    </source>
</evidence>
<evidence type="ECO:0000255" key="2">
    <source>
        <dbReference type="PROSITE-ProRule" id="PRU01266"/>
    </source>
</evidence>
<sequence>MKTPKVGFVSLGCPKALVDSERILTQLKTEGYQVASDYDGADLVVVNTCGFIESAVQESLDAIGEAMSENGRVIVTGCLGKDEDKIRQMHPNVLKVTGAAAYQDVMEAVHEYVPAPPKHNPFIDLVPEQGIRLTPKHYAYLKISEGCNHRCTFCIIPSMRGDLVSRPVGSVLEEAAALKRAGVKEILVISQDTSAYGVDTKYKLDFWNGQPVKTKFFDMCEALGQLGIWVRLHYVYPYPHVDAVIDLMAQGKILPYLDIPFQHASPRVLKLMKRPAHSENTLEKIKLWREKCPNLVIRSTFVVGFPGETEEDFQILLDWLVEAQLDRVGCFTYSPVEGATANDLPDHVPEEIKQERYERFMQVQQQISAAKLQKRIGQTMTVLVDSLEDEYPVAVARSYADAPEIDGNVFVEDIDKSTIQPGDMLEVEITDADEYDLFAKLIKIKSV</sequence>
<proteinExistence type="inferred from homology"/>
<gene>
    <name evidence="1" type="primary">rimO</name>
    <name type="ordered locus">ABBFA_001471</name>
</gene>